<name>PRSA_STAAW</name>
<evidence type="ECO:0000255" key="1">
    <source>
        <dbReference type="HAMAP-Rule" id="MF_01145"/>
    </source>
</evidence>
<evidence type="ECO:0000256" key="2">
    <source>
        <dbReference type="SAM" id="MobiDB-lite"/>
    </source>
</evidence>
<protein>
    <recommendedName>
        <fullName evidence="1">Foldase protein PrsA</fullName>
        <ecNumber evidence="1">5.2.1.8</ecNumber>
    </recommendedName>
</protein>
<organism>
    <name type="scientific">Staphylococcus aureus (strain MW2)</name>
    <dbReference type="NCBI Taxonomy" id="196620"/>
    <lineage>
        <taxon>Bacteria</taxon>
        <taxon>Bacillati</taxon>
        <taxon>Bacillota</taxon>
        <taxon>Bacilli</taxon>
        <taxon>Bacillales</taxon>
        <taxon>Staphylococcaceae</taxon>
        <taxon>Staphylococcus</taxon>
    </lineage>
</organism>
<keyword id="KW-1003">Cell membrane</keyword>
<keyword id="KW-0413">Isomerase</keyword>
<keyword id="KW-0449">Lipoprotein</keyword>
<keyword id="KW-0472">Membrane</keyword>
<keyword id="KW-0564">Palmitate</keyword>
<keyword id="KW-0697">Rotamase</keyword>
<keyword id="KW-0732">Signal</keyword>
<accession>P60749</accession>
<accession>Q99T36</accession>
<reference key="1">
    <citation type="journal article" date="2002" name="Lancet">
        <title>Genome and virulence determinants of high virulence community-acquired MRSA.</title>
        <authorList>
            <person name="Baba T."/>
            <person name="Takeuchi F."/>
            <person name="Kuroda M."/>
            <person name="Yuzawa H."/>
            <person name="Aoki K."/>
            <person name="Oguchi A."/>
            <person name="Nagai Y."/>
            <person name="Iwama N."/>
            <person name="Asano K."/>
            <person name="Naimi T."/>
            <person name="Kuroda H."/>
            <person name="Cui L."/>
            <person name="Yamamoto K."/>
            <person name="Hiramatsu K."/>
        </authorList>
    </citation>
    <scope>NUCLEOTIDE SEQUENCE [LARGE SCALE GENOMIC DNA]</scope>
    <source>
        <strain>MW2</strain>
    </source>
</reference>
<comment type="function">
    <text evidence="1">Plays a major role in protein secretion by helping the post-translocational extracellular folding of several secreted proteins.</text>
</comment>
<comment type="catalytic activity">
    <reaction evidence="1">
        <text>[protein]-peptidylproline (omega=180) = [protein]-peptidylproline (omega=0)</text>
        <dbReference type="Rhea" id="RHEA:16237"/>
        <dbReference type="Rhea" id="RHEA-COMP:10747"/>
        <dbReference type="Rhea" id="RHEA-COMP:10748"/>
        <dbReference type="ChEBI" id="CHEBI:83833"/>
        <dbReference type="ChEBI" id="CHEBI:83834"/>
        <dbReference type="EC" id="5.2.1.8"/>
    </reaction>
</comment>
<comment type="subcellular location">
    <subcellularLocation>
        <location evidence="1">Cell membrane</location>
        <topology evidence="1">Lipid-anchor</topology>
    </subcellularLocation>
</comment>
<comment type="similarity">
    <text evidence="1">Belongs to the PrsA family.</text>
</comment>
<proteinExistence type="inferred from homology"/>
<dbReference type="EC" id="5.2.1.8" evidence="1"/>
<dbReference type="EMBL" id="BA000033">
    <property type="protein sequence ID" value="BAB95647.1"/>
    <property type="molecule type" value="Genomic_DNA"/>
</dbReference>
<dbReference type="RefSeq" id="WP_000782121.1">
    <property type="nucleotide sequence ID" value="NC_003923.1"/>
</dbReference>
<dbReference type="SMR" id="P60749"/>
<dbReference type="KEGG" id="sam:MW1782"/>
<dbReference type="HOGENOM" id="CLU_034646_6_2_9"/>
<dbReference type="GO" id="GO:0005886">
    <property type="term" value="C:plasma membrane"/>
    <property type="evidence" value="ECO:0007669"/>
    <property type="project" value="UniProtKB-SubCell"/>
</dbReference>
<dbReference type="GO" id="GO:0003755">
    <property type="term" value="F:peptidyl-prolyl cis-trans isomerase activity"/>
    <property type="evidence" value="ECO:0007669"/>
    <property type="project" value="UniProtKB-UniRule"/>
</dbReference>
<dbReference type="GO" id="GO:0006457">
    <property type="term" value="P:protein folding"/>
    <property type="evidence" value="ECO:0007669"/>
    <property type="project" value="UniProtKB-UniRule"/>
</dbReference>
<dbReference type="Gene3D" id="3.10.50.40">
    <property type="match status" value="1"/>
</dbReference>
<dbReference type="Gene3D" id="1.10.4030.10">
    <property type="entry name" value="Porin chaperone SurA, peptide-binding domain"/>
    <property type="match status" value="1"/>
</dbReference>
<dbReference type="HAMAP" id="MF_01145">
    <property type="entry name" value="Foldase_PrsA"/>
    <property type="match status" value="1"/>
</dbReference>
<dbReference type="InterPro" id="IPR023059">
    <property type="entry name" value="Foldase_PrsA"/>
</dbReference>
<dbReference type="InterPro" id="IPR046357">
    <property type="entry name" value="PPIase_dom_sf"/>
</dbReference>
<dbReference type="InterPro" id="IPR000297">
    <property type="entry name" value="PPIase_PpiC"/>
</dbReference>
<dbReference type="InterPro" id="IPR050245">
    <property type="entry name" value="PrsA_foldase"/>
</dbReference>
<dbReference type="InterPro" id="IPR027304">
    <property type="entry name" value="Trigger_fact/SurA_dom_sf"/>
</dbReference>
<dbReference type="PANTHER" id="PTHR47245:SF1">
    <property type="entry name" value="FOLDASE PROTEIN PRSA"/>
    <property type="match status" value="1"/>
</dbReference>
<dbReference type="PANTHER" id="PTHR47245">
    <property type="entry name" value="PEPTIDYLPROLYL ISOMERASE"/>
    <property type="match status" value="1"/>
</dbReference>
<dbReference type="Pfam" id="PF00639">
    <property type="entry name" value="Rotamase"/>
    <property type="match status" value="1"/>
</dbReference>
<dbReference type="SUPFAM" id="SSF54534">
    <property type="entry name" value="FKBP-like"/>
    <property type="match status" value="1"/>
</dbReference>
<dbReference type="SUPFAM" id="SSF109998">
    <property type="entry name" value="Triger factor/SurA peptide-binding domain-like"/>
    <property type="match status" value="1"/>
</dbReference>
<dbReference type="PROSITE" id="PS50198">
    <property type="entry name" value="PPIC_PPIASE_2"/>
    <property type="match status" value="1"/>
</dbReference>
<dbReference type="PROSITE" id="PS51257">
    <property type="entry name" value="PROKAR_LIPOPROTEIN"/>
    <property type="match status" value="1"/>
</dbReference>
<sequence>MKMINKLIVPVTASALLLGACGASATDSKENTLISSKAGDVTVADTMKKIGKDQIANASFTEMLNKILADKYKNKVNDKKIDEQIEKMQKQYGGKDKFEKALQQQGLTADKYKENLRTAAYHKELLSDKIKISDSEIKEDSKKASHILIKVKSKKSDKEGLDDKEAKQKAEEIQKEVSKDPSKFGEIAKKESMDTGSAKKDGELGYVLKGQTDKDFEKALFKLKDGEVSEVVKSSFGYHIIKADKPTDFNSEKQSLKEKLVDQKVQKNPKLLTDAYKDLLKEYDVDFKDRDIKSVVEDKILNPEKLKQGGAQGGQSGMSQ</sequence>
<gene>
    <name evidence="1" type="primary">prsA</name>
    <name type="ordered locus">MW1782</name>
</gene>
<feature type="signal peptide" evidence="1">
    <location>
        <begin position="1"/>
        <end position="20"/>
    </location>
</feature>
<feature type="chain" id="PRO_0000029322" description="Foldase protein PrsA">
    <location>
        <begin position="21"/>
        <end position="320"/>
    </location>
</feature>
<feature type="domain" description="PpiC" evidence="1">
    <location>
        <begin position="139"/>
        <end position="245"/>
    </location>
</feature>
<feature type="region of interest" description="Disordered" evidence="2">
    <location>
        <begin position="159"/>
        <end position="198"/>
    </location>
</feature>
<feature type="lipid moiety-binding region" description="N-palmitoyl cysteine" evidence="1">
    <location>
        <position position="21"/>
    </location>
</feature>
<feature type="lipid moiety-binding region" description="S-diacylglycerol cysteine" evidence="1">
    <location>
        <position position="21"/>
    </location>
</feature>